<reference evidence="4" key="1">
    <citation type="journal article" date="2000" name="Eur. J. Biochem.">
        <title>The amino-acid sequence of the abalone (Haliotis laevigata) nacre protein perlucin. Detection of a functional C-type lectin domain with galactose/mannose specificity.</title>
        <authorList>
            <person name="Mann K."/>
            <person name="Weiss I.M."/>
            <person name="Andre S."/>
            <person name="Gabius H.-J."/>
            <person name="Fritz M."/>
        </authorList>
    </citation>
    <scope>PROTEIN SEQUENCE</scope>
    <scope>FUNCTION</scope>
    <source>
        <tissue>Shell</tissue>
    </source>
</reference>
<reference evidence="4" key="2">
    <citation type="journal article" date="2000" name="Biochem. Biophys. Res. Commun.">
        <title>Purification and characterization of perlucin and perlustrin, two new proteins from the shell of the mollusc Haliotis laevigata.</title>
        <authorList>
            <person name="Weiss I.M."/>
            <person name="Kaufmann S."/>
            <person name="Mann K."/>
            <person name="Fritz M."/>
        </authorList>
    </citation>
    <scope>PROTEIN SEQUENCE OF 1-32</scope>
    <source>
        <tissue>Shell</tissue>
    </source>
</reference>
<evidence type="ECO:0000255" key="1">
    <source>
        <dbReference type="PROSITE-ProRule" id="PRU00040"/>
    </source>
</evidence>
<evidence type="ECO:0000269" key="2">
    <source>
    </source>
</evidence>
<evidence type="ECO:0000303" key="3">
    <source>
    </source>
</evidence>
<evidence type="ECO:0000305" key="4"/>
<feature type="chain" id="PRO_0000046722" description="Perlucin">
    <location>
        <begin position="1"/>
        <end position="155"/>
    </location>
</feature>
<feature type="domain" description="C-type lectin" evidence="1">
    <location>
        <begin position="9"/>
        <end position="128"/>
    </location>
</feature>
<feature type="repeat" description="1">
    <location>
        <begin position="136"/>
        <end position="145"/>
    </location>
</feature>
<feature type="repeat" description="2">
    <location>
        <begin position="146"/>
        <end position="155"/>
    </location>
</feature>
<feature type="glycosylation site" description="N-linked (GlcNAc...) asparagine" evidence="4">
    <location>
        <position position="84"/>
    </location>
</feature>
<feature type="disulfide bond" evidence="1">
    <location>
        <begin position="2"/>
        <end position="13"/>
    </location>
</feature>
<feature type="disulfide bond" evidence="1">
    <location>
        <begin position="30"/>
        <end position="127"/>
    </location>
</feature>
<feature type="disulfide bond" evidence="1">
    <location>
        <begin position="102"/>
        <end position="119"/>
    </location>
</feature>
<feature type="sequence variant" evidence="2 3">
    <original>L</original>
    <variation>I</variation>
    <location>
        <position position="4"/>
    </location>
</feature>
<feature type="sequence variant" evidence="2 3">
    <original>L</original>
    <variation>P</variation>
    <location>
        <position position="4"/>
    </location>
</feature>
<feature type="sequence variant" evidence="2">
    <original>N</original>
    <variation>H</variation>
    <location>
        <position position="9"/>
    </location>
</feature>
<feature type="sequence variant" evidence="2 3">
    <original>R</original>
    <variation>G</variation>
    <location>
        <position position="11"/>
    </location>
</feature>
<feature type="sequence variant" evidence="2 3">
    <original>K</original>
    <variation>R</variation>
    <location>
        <position position="20"/>
    </location>
</feature>
<feature type="sequence variant" evidence="2">
    <original>E</original>
    <variation>D</variation>
    <location>
        <position position="45"/>
    </location>
</feature>
<feature type="sequence variant" evidence="2">
    <original>F</original>
    <variation>V</variation>
    <location>
        <position position="60"/>
    </location>
</feature>
<feature type="sequence variant" evidence="2">
    <original>N</original>
    <variation>K</variation>
    <location>
        <position position="61"/>
    </location>
</feature>
<feature type="sequence variant" evidence="2">
    <original>Q</original>
    <variation>E</variation>
    <location>
        <position position="80"/>
    </location>
</feature>
<feature type="sequence variant" evidence="2">
    <original>R</original>
    <variation>H</variation>
    <location>
        <position position="131"/>
    </location>
</feature>
<feature type="sequence variant" evidence="2">
    <original>P</original>
    <variation>S</variation>
    <location>
        <position position="133"/>
    </location>
</feature>
<feature type="sequence variant" evidence="2">
    <original>R</original>
    <variation>M</variation>
    <location>
        <position position="145"/>
    </location>
</feature>
<feature type="sequence variant" evidence="2">
    <original>R</original>
    <variation>K</variation>
    <location>
        <position position="155"/>
    </location>
</feature>
<feature type="unsure residue">
    <location>
        <position position="84"/>
    </location>
</feature>
<name>PLC_HALLA</name>
<proteinExistence type="evidence at protein level"/>
<dbReference type="PIR" id="S78774">
    <property type="entry name" value="S78774"/>
</dbReference>
<dbReference type="SMR" id="P82596"/>
<dbReference type="GO" id="GO:0030246">
    <property type="term" value="F:carbohydrate binding"/>
    <property type="evidence" value="ECO:0007669"/>
    <property type="project" value="UniProtKB-KW"/>
</dbReference>
<dbReference type="Gene3D" id="3.10.100.10">
    <property type="entry name" value="Mannose-Binding Protein A, subunit A"/>
    <property type="match status" value="1"/>
</dbReference>
<dbReference type="InterPro" id="IPR001304">
    <property type="entry name" value="C-type_lectin-like"/>
</dbReference>
<dbReference type="InterPro" id="IPR016186">
    <property type="entry name" value="C-type_lectin-like/link_sf"/>
</dbReference>
<dbReference type="InterPro" id="IPR050111">
    <property type="entry name" value="C-type_lectin/snaclec_domain"/>
</dbReference>
<dbReference type="InterPro" id="IPR018378">
    <property type="entry name" value="C-type_lectin_CS"/>
</dbReference>
<dbReference type="InterPro" id="IPR016187">
    <property type="entry name" value="CTDL_fold"/>
</dbReference>
<dbReference type="PANTHER" id="PTHR22803">
    <property type="entry name" value="MANNOSE, PHOSPHOLIPASE, LECTIN RECEPTOR RELATED"/>
    <property type="match status" value="1"/>
</dbReference>
<dbReference type="Pfam" id="PF00059">
    <property type="entry name" value="Lectin_C"/>
    <property type="match status" value="1"/>
</dbReference>
<dbReference type="SMART" id="SM00034">
    <property type="entry name" value="CLECT"/>
    <property type="match status" value="1"/>
</dbReference>
<dbReference type="SUPFAM" id="SSF56436">
    <property type="entry name" value="C-type lectin-like"/>
    <property type="match status" value="1"/>
</dbReference>
<dbReference type="PROSITE" id="PS00615">
    <property type="entry name" value="C_TYPE_LECTIN_1"/>
    <property type="match status" value="1"/>
</dbReference>
<dbReference type="PROSITE" id="PS50041">
    <property type="entry name" value="C_TYPE_LECTIN_2"/>
    <property type="match status" value="1"/>
</dbReference>
<keyword id="KW-0903">Direct protein sequencing</keyword>
<keyword id="KW-1015">Disulfide bond</keyword>
<keyword id="KW-0325">Glycoprotein</keyword>
<keyword id="KW-0430">Lectin</keyword>
<keyword id="KW-0677">Repeat</keyword>
<comment type="function">
    <text evidence="2">May promote nucleation and/or growth of calcium carbonate crystals. Binds to D-galactose and D-mannose/D-glucose.</text>
</comment>
<comment type="PTM">
    <text evidence="2">Glycosylated.</text>
</comment>
<protein>
    <recommendedName>
        <fullName>Perlucin</fullName>
    </recommendedName>
</protein>
<accession>P82596</accession>
<accession>Q7M4F8</accession>
<sequence>GCPLGFHQNRRSCYWFSTIKSSFAEAAGYCRYLESHLAIISNKDEDSFIRGYATRLGEAFNYWLGASDLNIEGRWLWEGQRRMNYTNWSPGQPDNAGGIEHCLELRRDLGNYLWNDYQCQKPSHFICEKERIPYTNSLHANLQQRDSLHANLQQR</sequence>
<organism>
    <name type="scientific">Haliotis laevigata</name>
    <name type="common">Smooth Australian abalone</name>
    <dbReference type="NCBI Taxonomy" id="36097"/>
    <lineage>
        <taxon>Eukaryota</taxon>
        <taxon>Metazoa</taxon>
        <taxon>Spiralia</taxon>
        <taxon>Lophotrochozoa</taxon>
        <taxon>Mollusca</taxon>
        <taxon>Gastropoda</taxon>
        <taxon>Vetigastropoda</taxon>
        <taxon>Lepetellida</taxon>
        <taxon>Haliotoidea</taxon>
        <taxon>Haliotidae</taxon>
        <taxon>Haliotis</taxon>
    </lineage>
</organism>